<protein>
    <recommendedName>
        <fullName evidence="1">Putative thymidine phosphorylase</fullName>
        <ecNumber evidence="1">2.4.2.4</ecNumber>
    </recommendedName>
    <alternativeName>
        <fullName evidence="1">TdRPase</fullName>
    </alternativeName>
</protein>
<name>TYPH_RALN1</name>
<proteinExistence type="inferred from homology"/>
<reference key="1">
    <citation type="journal article" date="2002" name="Nature">
        <title>Genome sequence of the plant pathogen Ralstonia solanacearum.</title>
        <authorList>
            <person name="Salanoubat M."/>
            <person name="Genin S."/>
            <person name="Artiguenave F."/>
            <person name="Gouzy J."/>
            <person name="Mangenot S."/>
            <person name="Arlat M."/>
            <person name="Billault A."/>
            <person name="Brottier P."/>
            <person name="Camus J.-C."/>
            <person name="Cattolico L."/>
            <person name="Chandler M."/>
            <person name="Choisne N."/>
            <person name="Claudel-Renard C."/>
            <person name="Cunnac S."/>
            <person name="Demange N."/>
            <person name="Gaspin C."/>
            <person name="Lavie M."/>
            <person name="Moisan A."/>
            <person name="Robert C."/>
            <person name="Saurin W."/>
            <person name="Schiex T."/>
            <person name="Siguier P."/>
            <person name="Thebault P."/>
            <person name="Whalen M."/>
            <person name="Wincker P."/>
            <person name="Levy M."/>
            <person name="Weissenbach J."/>
            <person name="Boucher C.A."/>
        </authorList>
    </citation>
    <scope>NUCLEOTIDE SEQUENCE [LARGE SCALE GENOMIC DNA]</scope>
    <source>
        <strain>ATCC BAA-1114 / GMI1000</strain>
    </source>
</reference>
<sequence>MLAPPEVAALPDRLTFKPLGIDTWQEHVIYMHPDCAICRAEGFTAQARVEVRIGLRSLIATLNLVGSGLLEMCEVSLSVSAVETLMARPGDIVTVSHAPALESLRAVRAKIYGAHLDTHQLASVVGDIAKERYADVHIAAFLSACAGGRMSVKETIDLTQAMVDSGECLEWDREIVADKHCVGGLPGNRTSPIVVAIAAAAGLLLPKTSSRAITSPAGTADTMETLTRVALSATELRRVVDRVGASLAWGGALSLSPADDVLIRVERALDVDSDAQLAASILSKKIAAGSTHVLIDVPVGPTAKVRSLQDLERLRMLLERVARSFGVRVTIVRTDGSQPVGRGIGPALEARDVLAVLQRSPAAPFDLRERSLLLAATLLEFCGAVEQGAGLEMATGVLDSGAAWRKFEEICEAQGGLRVPGEAIFRRDVVAEQDGIVTEIDNRHLARIAKLAGAPMRQVAGVEMHVRLHDQVKAGRPLFTIHAQASGELEYSVAYALMHPAVSIAPT</sequence>
<gene>
    <name type="ordered locus">RSc0204</name>
    <name type="ORF">RS00636</name>
</gene>
<evidence type="ECO:0000255" key="1">
    <source>
        <dbReference type="HAMAP-Rule" id="MF_00703"/>
    </source>
</evidence>
<dbReference type="EC" id="2.4.2.4" evidence="1"/>
<dbReference type="EMBL" id="AL646052">
    <property type="protein sequence ID" value="CAD13732.1"/>
    <property type="molecule type" value="Genomic_DNA"/>
</dbReference>
<dbReference type="RefSeq" id="WP_011000171.1">
    <property type="nucleotide sequence ID" value="NC_003295.1"/>
</dbReference>
<dbReference type="SMR" id="Q8Y2X7"/>
<dbReference type="STRING" id="267608.RSc0204"/>
<dbReference type="EnsemblBacteria" id="CAD13732">
    <property type="protein sequence ID" value="CAD13732"/>
    <property type="gene ID" value="RSc0204"/>
</dbReference>
<dbReference type="KEGG" id="rso:RSc0204"/>
<dbReference type="eggNOG" id="COG0213">
    <property type="taxonomic scope" value="Bacteria"/>
</dbReference>
<dbReference type="HOGENOM" id="CLU_025040_6_0_4"/>
<dbReference type="Proteomes" id="UP000001436">
    <property type="component" value="Chromosome"/>
</dbReference>
<dbReference type="GO" id="GO:0005829">
    <property type="term" value="C:cytosol"/>
    <property type="evidence" value="ECO:0007669"/>
    <property type="project" value="TreeGrafter"/>
</dbReference>
<dbReference type="GO" id="GO:0004645">
    <property type="term" value="F:1,4-alpha-oligoglucan phosphorylase activity"/>
    <property type="evidence" value="ECO:0007669"/>
    <property type="project" value="InterPro"/>
</dbReference>
<dbReference type="GO" id="GO:0009032">
    <property type="term" value="F:thymidine phosphorylase activity"/>
    <property type="evidence" value="ECO:0007669"/>
    <property type="project" value="UniProtKB-UniRule"/>
</dbReference>
<dbReference type="GO" id="GO:0006206">
    <property type="term" value="P:pyrimidine nucleobase metabolic process"/>
    <property type="evidence" value="ECO:0007669"/>
    <property type="project" value="InterPro"/>
</dbReference>
<dbReference type="GO" id="GO:0006213">
    <property type="term" value="P:pyrimidine nucleoside metabolic process"/>
    <property type="evidence" value="ECO:0007669"/>
    <property type="project" value="InterPro"/>
</dbReference>
<dbReference type="Gene3D" id="1.20.970.50">
    <property type="match status" value="1"/>
</dbReference>
<dbReference type="Gene3D" id="3.40.1030.10">
    <property type="entry name" value="Nucleoside phosphorylase/phosphoribosyltransferase catalytic domain"/>
    <property type="match status" value="1"/>
</dbReference>
<dbReference type="Gene3D" id="3.90.1170.30">
    <property type="entry name" value="Pyrimidine nucleoside phosphorylase-like, C-terminal domain"/>
    <property type="match status" value="1"/>
</dbReference>
<dbReference type="HAMAP" id="MF_00703">
    <property type="entry name" value="Thymid_phosp_2"/>
    <property type="match status" value="1"/>
</dbReference>
<dbReference type="InterPro" id="IPR000312">
    <property type="entry name" value="Glycosyl_Trfase_fam3"/>
</dbReference>
<dbReference type="InterPro" id="IPR017459">
    <property type="entry name" value="Glycosyl_Trfase_fam3_N_dom"/>
</dbReference>
<dbReference type="InterPro" id="IPR036320">
    <property type="entry name" value="Glycosyl_Trfase_fam3_N_dom_sf"/>
</dbReference>
<dbReference type="InterPro" id="IPR035902">
    <property type="entry name" value="Nuc_phospho_transferase"/>
</dbReference>
<dbReference type="InterPro" id="IPR036566">
    <property type="entry name" value="PYNP-like_C_sf"/>
</dbReference>
<dbReference type="InterPro" id="IPR013102">
    <property type="entry name" value="PYNP_C"/>
</dbReference>
<dbReference type="InterPro" id="IPR017872">
    <property type="entry name" value="Pyrmidine_PPase_CS"/>
</dbReference>
<dbReference type="InterPro" id="IPR028579">
    <property type="entry name" value="Thym_Pase_Put"/>
</dbReference>
<dbReference type="InterPro" id="IPR013466">
    <property type="entry name" value="Thymidine/AMP_Pase"/>
</dbReference>
<dbReference type="InterPro" id="IPR000053">
    <property type="entry name" value="Thymidine/pyrmidine_PPase"/>
</dbReference>
<dbReference type="NCBIfam" id="TIGR02645">
    <property type="entry name" value="ARCH_P_rylase"/>
    <property type="match status" value="1"/>
</dbReference>
<dbReference type="NCBIfam" id="NF003338">
    <property type="entry name" value="PRK04350.1"/>
    <property type="match status" value="1"/>
</dbReference>
<dbReference type="PANTHER" id="PTHR10515">
    <property type="entry name" value="THYMIDINE PHOSPHORYLASE"/>
    <property type="match status" value="1"/>
</dbReference>
<dbReference type="PANTHER" id="PTHR10515:SF0">
    <property type="entry name" value="THYMIDINE PHOSPHORYLASE"/>
    <property type="match status" value="1"/>
</dbReference>
<dbReference type="Pfam" id="PF02885">
    <property type="entry name" value="Glycos_trans_3N"/>
    <property type="match status" value="1"/>
</dbReference>
<dbReference type="Pfam" id="PF00591">
    <property type="entry name" value="Glycos_transf_3"/>
    <property type="match status" value="1"/>
</dbReference>
<dbReference type="Pfam" id="PF07831">
    <property type="entry name" value="PYNP_C"/>
    <property type="match status" value="1"/>
</dbReference>
<dbReference type="SMART" id="SM00941">
    <property type="entry name" value="PYNP_C"/>
    <property type="match status" value="1"/>
</dbReference>
<dbReference type="SUPFAM" id="SSF52418">
    <property type="entry name" value="Nucleoside phosphorylase/phosphoribosyltransferase catalytic domain"/>
    <property type="match status" value="1"/>
</dbReference>
<dbReference type="SUPFAM" id="SSF47648">
    <property type="entry name" value="Nucleoside phosphorylase/phosphoribosyltransferase N-terminal domain"/>
    <property type="match status" value="1"/>
</dbReference>
<dbReference type="SUPFAM" id="SSF54680">
    <property type="entry name" value="Pyrimidine nucleoside phosphorylase C-terminal domain"/>
    <property type="match status" value="1"/>
</dbReference>
<dbReference type="PROSITE" id="PS00647">
    <property type="entry name" value="THYMID_PHOSPHORYLASE"/>
    <property type="match status" value="1"/>
</dbReference>
<organism>
    <name type="scientific">Ralstonia nicotianae (strain ATCC BAA-1114 / GMI1000)</name>
    <name type="common">Ralstonia solanacearum</name>
    <dbReference type="NCBI Taxonomy" id="267608"/>
    <lineage>
        <taxon>Bacteria</taxon>
        <taxon>Pseudomonadati</taxon>
        <taxon>Pseudomonadota</taxon>
        <taxon>Betaproteobacteria</taxon>
        <taxon>Burkholderiales</taxon>
        <taxon>Burkholderiaceae</taxon>
        <taxon>Ralstonia</taxon>
        <taxon>Ralstonia solanacearum species complex</taxon>
    </lineage>
</organism>
<accession>Q8Y2X7</accession>
<keyword id="KW-0328">Glycosyltransferase</keyword>
<keyword id="KW-1185">Reference proteome</keyword>
<keyword id="KW-0808">Transferase</keyword>
<comment type="catalytic activity">
    <reaction evidence="1">
        <text>thymidine + phosphate = 2-deoxy-alpha-D-ribose 1-phosphate + thymine</text>
        <dbReference type="Rhea" id="RHEA:16037"/>
        <dbReference type="ChEBI" id="CHEBI:17748"/>
        <dbReference type="ChEBI" id="CHEBI:17821"/>
        <dbReference type="ChEBI" id="CHEBI:43474"/>
        <dbReference type="ChEBI" id="CHEBI:57259"/>
        <dbReference type="EC" id="2.4.2.4"/>
    </reaction>
</comment>
<comment type="similarity">
    <text evidence="1">Belongs to the thymidine/pyrimidine-nucleoside phosphorylase family. Type 2 subfamily.</text>
</comment>
<feature type="chain" id="PRO_0000059096" description="Putative thymidine phosphorylase">
    <location>
        <begin position="1"/>
        <end position="507"/>
    </location>
</feature>